<sequence length="59" mass="6582">MRQLKGKPKKETSKDKRERKQAMQDARKQVATVVLPTVAVVVLLIVFFVYAATRPGAIA</sequence>
<accession>Q9I859</accession>
<proteinExistence type="inferred from homology"/>
<evidence type="ECO:0000255" key="1"/>
<evidence type="ECO:0000256" key="2">
    <source>
        <dbReference type="SAM" id="MobiDB-lite"/>
    </source>
</evidence>
<evidence type="ECO:0000305" key="3"/>
<reference key="1">
    <citation type="journal article" date="2000" name="Gene">
        <title>Characterization of the Fugu rubripes NLK and FN5 genes flanking the NF1 (Neurofibromatosis type 1) gene in the 5' direction and mapping of the human counterparts.</title>
        <authorList>
            <person name="Kehrer-Sawatzki H."/>
            <person name="Moschgath E."/>
            <person name="Maier C."/>
            <person name="Legius E."/>
            <person name="Elgar G."/>
            <person name="Krone W."/>
        </authorList>
    </citation>
    <scope>NUCLEOTIDE SEQUENCE [GENOMIC DNA / MRNA]</scope>
</reference>
<gene>
    <name type="primary">smco4</name>
    <name type="synonym">fn5</name>
</gene>
<dbReference type="EMBL" id="AF197897">
    <property type="protein sequence ID" value="AAF86839.1"/>
    <property type="molecule type" value="Genomic_DNA"/>
</dbReference>
<dbReference type="EMBL" id="AF196775">
    <property type="protein sequence ID" value="AAF86044.1"/>
    <property type="molecule type" value="mRNA"/>
</dbReference>
<dbReference type="RefSeq" id="NP_001027770.1">
    <property type="nucleotide sequence ID" value="NM_001032598.1"/>
</dbReference>
<dbReference type="SMR" id="Q9I859"/>
<dbReference type="STRING" id="31033.ENSTRUP00000016153"/>
<dbReference type="Ensembl" id="ENSTRUT00000016225.3">
    <property type="protein sequence ID" value="ENSTRUP00000016153.1"/>
    <property type="gene ID" value="ENSTRUG00000006578.3"/>
</dbReference>
<dbReference type="GeneID" id="445933"/>
<dbReference type="KEGG" id="tru:445933"/>
<dbReference type="CTD" id="56935"/>
<dbReference type="GeneTree" id="ENSGT00390000015987"/>
<dbReference type="HOGENOM" id="CLU_209950_0_0_1"/>
<dbReference type="InParanoid" id="Q9I859"/>
<dbReference type="OMA" id="RKETWKD"/>
<dbReference type="TreeFam" id="TF324415"/>
<dbReference type="Proteomes" id="UP000005226">
    <property type="component" value="Chromosome 11"/>
</dbReference>
<dbReference type="GO" id="GO:0016020">
    <property type="term" value="C:membrane"/>
    <property type="evidence" value="ECO:0007669"/>
    <property type="project" value="UniProtKB-SubCell"/>
</dbReference>
<dbReference type="InterPro" id="IPR027960">
    <property type="entry name" value="DUF4519"/>
</dbReference>
<dbReference type="PANTHER" id="PTHR34644">
    <property type="entry name" value="SINGLE-PASS MEMBRANE AND COILED-COIL DOMAIN-CONTAINING PROTEIN 4"/>
    <property type="match status" value="1"/>
</dbReference>
<dbReference type="PANTHER" id="PTHR34644:SF2">
    <property type="entry name" value="SINGLE-PASS MEMBRANE AND COILED-COIL DOMAIN-CONTAINING PROTEIN 4"/>
    <property type="match status" value="1"/>
</dbReference>
<dbReference type="Pfam" id="PF15012">
    <property type="entry name" value="DUF4519"/>
    <property type="match status" value="1"/>
</dbReference>
<comment type="subcellular location">
    <subcellularLocation>
        <location evidence="3">Membrane</location>
        <topology evidence="3">Single-pass membrane protein</topology>
    </subcellularLocation>
</comment>
<comment type="similarity">
    <text evidence="3">Belongs to the SMCO4 family.</text>
</comment>
<feature type="chain" id="PRO_0000087318" description="Single-pass membrane and coiled-coil domain-containing protein 4">
    <location>
        <begin position="1"/>
        <end position="59"/>
    </location>
</feature>
<feature type="transmembrane region" description="Helical" evidence="1">
    <location>
        <begin position="32"/>
        <end position="52"/>
    </location>
</feature>
<feature type="region of interest" description="Disordered" evidence="2">
    <location>
        <begin position="1"/>
        <end position="23"/>
    </location>
</feature>
<feature type="coiled-coil region" evidence="1">
    <location>
        <begin position="9"/>
        <end position="30"/>
    </location>
</feature>
<feature type="compositionally biased region" description="Basic and acidic residues" evidence="2">
    <location>
        <begin position="9"/>
        <end position="23"/>
    </location>
</feature>
<organism>
    <name type="scientific">Takifugu rubripes</name>
    <name type="common">Japanese pufferfish</name>
    <name type="synonym">Fugu rubripes</name>
    <dbReference type="NCBI Taxonomy" id="31033"/>
    <lineage>
        <taxon>Eukaryota</taxon>
        <taxon>Metazoa</taxon>
        <taxon>Chordata</taxon>
        <taxon>Craniata</taxon>
        <taxon>Vertebrata</taxon>
        <taxon>Euteleostomi</taxon>
        <taxon>Actinopterygii</taxon>
        <taxon>Neopterygii</taxon>
        <taxon>Teleostei</taxon>
        <taxon>Neoteleostei</taxon>
        <taxon>Acanthomorphata</taxon>
        <taxon>Eupercaria</taxon>
        <taxon>Tetraodontiformes</taxon>
        <taxon>Tetradontoidea</taxon>
        <taxon>Tetraodontidae</taxon>
        <taxon>Takifugu</taxon>
    </lineage>
</organism>
<keyword id="KW-0175">Coiled coil</keyword>
<keyword id="KW-0472">Membrane</keyword>
<keyword id="KW-1185">Reference proteome</keyword>
<keyword id="KW-0812">Transmembrane</keyword>
<keyword id="KW-1133">Transmembrane helix</keyword>
<name>SMCO4_TAKRU</name>
<protein>
    <recommendedName>
        <fullName>Single-pass membrane and coiled-coil domain-containing protein 4</fullName>
    </recommendedName>
    <alternativeName>
        <fullName>Protein FN5</fullName>
    </alternativeName>
</protein>